<sequence>MKKFFVTAAFPYVNGYLHLGHLVTYIKAEITARYKKMRGYDVLFPMGFHATGAPIYAAAYKVSIGDPKQIETLKKMGIKDIEKFKDPAYWVEYFSKAAKEDLSKLGFMIEWERSFTTVFNKPFHKFVEWQYHRLREKGYIYRGAHPIVWDPKVNMVIGDHDRPDDYAGIRPIEGVIIKFYSKDLDAYLPAFTLRPETVFGVVNIWVNPETEYVLAKVKKVFYVYELYSLYKKFGRLPLNIENRDKLEKLIQDYNNLLDRLKQYEKGIDLIAHAEEIAYKPKEEFVKELKEFAEKEGIKIEEKDIELLYEYYNTKVETQEEKWILPNTIVIEELKNQDFEIEIIGKIDKLIKTLAENPVTKELVPVLPAKFVDPEVGTGIVMSVPSHAPYDYVGLLDLIKTELKEFAEQALKNVRPVVKVEGFSEMPAKDIVESMNITSQEERDKLEKATQRLYSKEFYHGVLTEHAQQFQGLPVKEAKMKIAEYLMENGYGYIYYTLPVRFKSRYGNKVVVKLVKGQWFIKYSDKQWKELAHKAVENMKFYPPQVKELIKEKIDWYDDWAFTHQKELGTALPWDPKWVIESLSDSTIYTAYYTIAHILQHPEKYNIDWDKLTIDVFDYVFLGKGDPKEIAKKTGISEEILKEMRNQFEYWYPVDIRFSAQDLIANHLVFYIFHHVAIFPESKWPRGIAVSGFVTVNGEKMSKSKGNFITIREAIQRYGRDAVRLAAAYAGNAELVDQNIDLEFMEKAKNEIIPRIESYLDMEGYDRDENSLDKWIVNRIRLYFKKLEEYYENIRPRDVINEFFKLENDFNFYRALVLEKPHKRAIEYFKKAVKALWPIIPHVVREPAWIGKEEPDEPWIRVGQYVDQVIKDLANTLKLVRISMARNVSHRLADLVKLYYEGAKLTEEEKEEIREFIEWKPVRIKIIYKNPSEFDILRDIIPYIEKVFGGKVVLELASESKEEKAKRAKEFKPAFVIE</sequence>
<organism>
    <name type="scientific">Nanoarchaeum equitans (strain Kin4-M)</name>
    <dbReference type="NCBI Taxonomy" id="228908"/>
    <lineage>
        <taxon>Archaea</taxon>
        <taxon>Nanobdellota</taxon>
        <taxon>Candidatus Nanoarchaeia</taxon>
        <taxon>Nanoarchaeales</taxon>
        <taxon>Nanoarchaeaceae</taxon>
        <taxon>Nanoarchaeum</taxon>
    </lineage>
</organism>
<feature type="chain" id="PRO_0000152136" description="Leucine--tRNA ligase">
    <location>
        <begin position="1"/>
        <end position="977"/>
    </location>
</feature>
<feature type="region of interest" description="Insert">
    <location>
        <begin position="220"/>
        <end position="318"/>
    </location>
</feature>
<feature type="short sequence motif" description="'HIGH' region">
    <location>
        <begin position="11"/>
        <end position="21"/>
    </location>
</feature>
<feature type="short sequence motif" description="'KMSKS' region">
    <location>
        <begin position="699"/>
        <end position="703"/>
    </location>
</feature>
<feature type="binding site" evidence="1">
    <location>
        <position position="702"/>
    </location>
    <ligand>
        <name>ATP</name>
        <dbReference type="ChEBI" id="CHEBI:30616"/>
    </ligand>
</feature>
<accession>P61760</accession>
<dbReference type="EC" id="6.1.1.4"/>
<dbReference type="EMBL" id="AE017199">
    <property type="protein sequence ID" value="AAR39092.1"/>
    <property type="molecule type" value="Genomic_DNA"/>
</dbReference>
<dbReference type="SMR" id="P61760"/>
<dbReference type="STRING" id="228908.NEQ239"/>
<dbReference type="EnsemblBacteria" id="AAR39092">
    <property type="protein sequence ID" value="AAR39092"/>
    <property type="gene ID" value="NEQ239"/>
</dbReference>
<dbReference type="KEGG" id="neq:NEQ239"/>
<dbReference type="PATRIC" id="fig|228908.8.peg.244"/>
<dbReference type="HOGENOM" id="CLU_004174_0_0_2"/>
<dbReference type="Proteomes" id="UP000000578">
    <property type="component" value="Chromosome"/>
</dbReference>
<dbReference type="GO" id="GO:0005737">
    <property type="term" value="C:cytoplasm"/>
    <property type="evidence" value="ECO:0007669"/>
    <property type="project" value="UniProtKB-SubCell"/>
</dbReference>
<dbReference type="GO" id="GO:0002161">
    <property type="term" value="F:aminoacyl-tRNA deacylase activity"/>
    <property type="evidence" value="ECO:0007669"/>
    <property type="project" value="InterPro"/>
</dbReference>
<dbReference type="GO" id="GO:0005524">
    <property type="term" value="F:ATP binding"/>
    <property type="evidence" value="ECO:0007669"/>
    <property type="project" value="UniProtKB-KW"/>
</dbReference>
<dbReference type="GO" id="GO:0004823">
    <property type="term" value="F:leucine-tRNA ligase activity"/>
    <property type="evidence" value="ECO:0007669"/>
    <property type="project" value="UniProtKB-EC"/>
</dbReference>
<dbReference type="GO" id="GO:0006429">
    <property type="term" value="P:leucyl-tRNA aminoacylation"/>
    <property type="evidence" value="ECO:0007669"/>
    <property type="project" value="InterPro"/>
</dbReference>
<dbReference type="Gene3D" id="3.40.50.620">
    <property type="entry name" value="HUPs"/>
    <property type="match status" value="2"/>
</dbReference>
<dbReference type="Gene3D" id="1.10.730.10">
    <property type="entry name" value="Isoleucyl-tRNA Synthetase, Domain 1"/>
    <property type="match status" value="1"/>
</dbReference>
<dbReference type="Gene3D" id="3.90.740.10">
    <property type="entry name" value="Valyl/Leucyl/Isoleucyl-tRNA synthetase, editing domain"/>
    <property type="match status" value="1"/>
</dbReference>
<dbReference type="InterPro" id="IPR001412">
    <property type="entry name" value="aa-tRNA-synth_I_CS"/>
</dbReference>
<dbReference type="InterPro" id="IPR002300">
    <property type="entry name" value="aa-tRNA-synth_Ia"/>
</dbReference>
<dbReference type="InterPro" id="IPR004493">
    <property type="entry name" value="Leu-tRNA-synth_Ia_arc/euk"/>
</dbReference>
<dbReference type="InterPro" id="IPR013155">
    <property type="entry name" value="M/V/L/I-tRNA-synth_anticd-bd"/>
</dbReference>
<dbReference type="InterPro" id="IPR014729">
    <property type="entry name" value="Rossmann-like_a/b/a_fold"/>
</dbReference>
<dbReference type="InterPro" id="IPR009080">
    <property type="entry name" value="tRNAsynth_Ia_anticodon-bd"/>
</dbReference>
<dbReference type="InterPro" id="IPR009008">
    <property type="entry name" value="Val/Leu/Ile-tRNA-synth_edit"/>
</dbReference>
<dbReference type="NCBIfam" id="NF008957">
    <property type="entry name" value="PRK12300.1"/>
    <property type="match status" value="1"/>
</dbReference>
<dbReference type="PANTHER" id="PTHR45794:SF1">
    <property type="entry name" value="LEUCINE--TRNA LIGASE, CYTOPLASMIC"/>
    <property type="match status" value="1"/>
</dbReference>
<dbReference type="PANTHER" id="PTHR45794">
    <property type="entry name" value="LEUCYL-TRNA SYNTHETASE"/>
    <property type="match status" value="1"/>
</dbReference>
<dbReference type="Pfam" id="PF08264">
    <property type="entry name" value="Anticodon_1"/>
    <property type="match status" value="1"/>
</dbReference>
<dbReference type="Pfam" id="PF00133">
    <property type="entry name" value="tRNA-synt_1"/>
    <property type="match status" value="1"/>
</dbReference>
<dbReference type="SUPFAM" id="SSF47323">
    <property type="entry name" value="Anticodon-binding domain of a subclass of class I aminoacyl-tRNA synthetases"/>
    <property type="match status" value="1"/>
</dbReference>
<dbReference type="SUPFAM" id="SSF52374">
    <property type="entry name" value="Nucleotidylyl transferase"/>
    <property type="match status" value="1"/>
</dbReference>
<dbReference type="SUPFAM" id="SSF50677">
    <property type="entry name" value="ValRS/IleRS/LeuRS editing domain"/>
    <property type="match status" value="2"/>
</dbReference>
<dbReference type="PROSITE" id="PS00178">
    <property type="entry name" value="AA_TRNA_LIGASE_I"/>
    <property type="match status" value="1"/>
</dbReference>
<keyword id="KW-0030">Aminoacyl-tRNA synthetase</keyword>
<keyword id="KW-0067">ATP-binding</keyword>
<keyword id="KW-0963">Cytoplasm</keyword>
<keyword id="KW-0436">Ligase</keyword>
<keyword id="KW-0547">Nucleotide-binding</keyword>
<keyword id="KW-0648">Protein biosynthesis</keyword>
<keyword id="KW-1185">Reference proteome</keyword>
<protein>
    <recommendedName>
        <fullName>Leucine--tRNA ligase</fullName>
        <ecNumber>6.1.1.4</ecNumber>
    </recommendedName>
    <alternativeName>
        <fullName>Leucyl-tRNA synthetase</fullName>
        <shortName>LeuRS</shortName>
    </alternativeName>
</protein>
<reference key="1">
    <citation type="journal article" date="2003" name="Proc. Natl. Acad. Sci. U.S.A.">
        <title>The genome of Nanoarchaeum equitans: insights into early archaeal evolution and derived parasitism.</title>
        <authorList>
            <person name="Waters E."/>
            <person name="Hohn M.J."/>
            <person name="Ahel I."/>
            <person name="Graham D.E."/>
            <person name="Adams M.D."/>
            <person name="Barnstead M."/>
            <person name="Beeson K.Y."/>
            <person name="Bibbs L."/>
            <person name="Bolanos R."/>
            <person name="Keller M."/>
            <person name="Kretz K."/>
            <person name="Lin X."/>
            <person name="Mathur E."/>
            <person name="Ni J."/>
            <person name="Podar M."/>
            <person name="Richardson T."/>
            <person name="Sutton G.G."/>
            <person name="Simon M."/>
            <person name="Soell D."/>
            <person name="Stetter K.O."/>
            <person name="Short J.M."/>
            <person name="Noorderwier M."/>
        </authorList>
    </citation>
    <scope>NUCLEOTIDE SEQUENCE [LARGE SCALE GENOMIC DNA]</scope>
    <source>
        <strain>Kin4-M</strain>
    </source>
</reference>
<gene>
    <name type="primary">leuS</name>
    <name type="ordered locus">NEQ239</name>
</gene>
<comment type="catalytic activity">
    <reaction>
        <text>tRNA(Leu) + L-leucine + ATP = L-leucyl-tRNA(Leu) + AMP + diphosphate</text>
        <dbReference type="Rhea" id="RHEA:11688"/>
        <dbReference type="Rhea" id="RHEA-COMP:9613"/>
        <dbReference type="Rhea" id="RHEA-COMP:9622"/>
        <dbReference type="ChEBI" id="CHEBI:30616"/>
        <dbReference type="ChEBI" id="CHEBI:33019"/>
        <dbReference type="ChEBI" id="CHEBI:57427"/>
        <dbReference type="ChEBI" id="CHEBI:78442"/>
        <dbReference type="ChEBI" id="CHEBI:78494"/>
        <dbReference type="ChEBI" id="CHEBI:456215"/>
        <dbReference type="EC" id="6.1.1.4"/>
    </reaction>
</comment>
<comment type="subcellular location">
    <subcellularLocation>
        <location evidence="1">Cytoplasm</location>
    </subcellularLocation>
</comment>
<comment type="similarity">
    <text evidence="2">Belongs to the class-I aminoacyl-tRNA synthetase family.</text>
</comment>
<proteinExistence type="inferred from homology"/>
<name>SYL_NANEQ</name>
<evidence type="ECO:0000250" key="1"/>
<evidence type="ECO:0000305" key="2"/>